<name>SYS_CAMC1</name>
<accession>A7ZBR7</accession>
<organism>
    <name type="scientific">Campylobacter concisus (strain 13826)</name>
    <dbReference type="NCBI Taxonomy" id="360104"/>
    <lineage>
        <taxon>Bacteria</taxon>
        <taxon>Pseudomonadati</taxon>
        <taxon>Campylobacterota</taxon>
        <taxon>Epsilonproteobacteria</taxon>
        <taxon>Campylobacterales</taxon>
        <taxon>Campylobacteraceae</taxon>
        <taxon>Campylobacter</taxon>
    </lineage>
</organism>
<dbReference type="EC" id="6.1.1.11" evidence="1"/>
<dbReference type="EMBL" id="CP000792">
    <property type="protein sequence ID" value="EAT98875.1"/>
    <property type="molecule type" value="Genomic_DNA"/>
</dbReference>
<dbReference type="RefSeq" id="WP_012001230.1">
    <property type="nucleotide sequence ID" value="NC_009802.2"/>
</dbReference>
<dbReference type="SMR" id="A7ZBR7"/>
<dbReference type="STRING" id="360104.CCC13826_0773"/>
<dbReference type="KEGG" id="cco:CCC13826_0773"/>
<dbReference type="eggNOG" id="COG0172">
    <property type="taxonomic scope" value="Bacteria"/>
</dbReference>
<dbReference type="HOGENOM" id="CLU_023797_1_1_7"/>
<dbReference type="OrthoDB" id="9804647at2"/>
<dbReference type="UniPathway" id="UPA00906">
    <property type="reaction ID" value="UER00895"/>
</dbReference>
<dbReference type="Proteomes" id="UP000001121">
    <property type="component" value="Chromosome"/>
</dbReference>
<dbReference type="GO" id="GO:0005737">
    <property type="term" value="C:cytoplasm"/>
    <property type="evidence" value="ECO:0007669"/>
    <property type="project" value="UniProtKB-SubCell"/>
</dbReference>
<dbReference type="GO" id="GO:0005524">
    <property type="term" value="F:ATP binding"/>
    <property type="evidence" value="ECO:0007669"/>
    <property type="project" value="UniProtKB-UniRule"/>
</dbReference>
<dbReference type="GO" id="GO:0004828">
    <property type="term" value="F:serine-tRNA ligase activity"/>
    <property type="evidence" value="ECO:0007669"/>
    <property type="project" value="UniProtKB-UniRule"/>
</dbReference>
<dbReference type="GO" id="GO:0016260">
    <property type="term" value="P:selenocysteine biosynthetic process"/>
    <property type="evidence" value="ECO:0007669"/>
    <property type="project" value="UniProtKB-UniRule"/>
</dbReference>
<dbReference type="GO" id="GO:0006434">
    <property type="term" value="P:seryl-tRNA aminoacylation"/>
    <property type="evidence" value="ECO:0007669"/>
    <property type="project" value="UniProtKB-UniRule"/>
</dbReference>
<dbReference type="CDD" id="cd00770">
    <property type="entry name" value="SerRS_core"/>
    <property type="match status" value="1"/>
</dbReference>
<dbReference type="Gene3D" id="3.30.930.10">
    <property type="entry name" value="Bira Bifunctional Protein, Domain 2"/>
    <property type="match status" value="1"/>
</dbReference>
<dbReference type="Gene3D" id="1.10.287.40">
    <property type="entry name" value="Serine-tRNA synthetase, tRNA binding domain"/>
    <property type="match status" value="1"/>
</dbReference>
<dbReference type="HAMAP" id="MF_00176">
    <property type="entry name" value="Ser_tRNA_synth_type1"/>
    <property type="match status" value="1"/>
</dbReference>
<dbReference type="InterPro" id="IPR002314">
    <property type="entry name" value="aa-tRNA-synt_IIb"/>
</dbReference>
<dbReference type="InterPro" id="IPR006195">
    <property type="entry name" value="aa-tRNA-synth_II"/>
</dbReference>
<dbReference type="InterPro" id="IPR045864">
    <property type="entry name" value="aa-tRNA-synth_II/BPL/LPL"/>
</dbReference>
<dbReference type="InterPro" id="IPR002317">
    <property type="entry name" value="Ser-tRNA-ligase_type_1"/>
</dbReference>
<dbReference type="InterPro" id="IPR015866">
    <property type="entry name" value="Ser-tRNA-synth_1_N"/>
</dbReference>
<dbReference type="InterPro" id="IPR042103">
    <property type="entry name" value="SerRS_1_N_sf"/>
</dbReference>
<dbReference type="InterPro" id="IPR033729">
    <property type="entry name" value="SerRS_core"/>
</dbReference>
<dbReference type="InterPro" id="IPR010978">
    <property type="entry name" value="tRNA-bd_arm"/>
</dbReference>
<dbReference type="NCBIfam" id="TIGR00414">
    <property type="entry name" value="serS"/>
    <property type="match status" value="1"/>
</dbReference>
<dbReference type="PANTHER" id="PTHR43697:SF1">
    <property type="entry name" value="SERINE--TRNA LIGASE"/>
    <property type="match status" value="1"/>
</dbReference>
<dbReference type="PANTHER" id="PTHR43697">
    <property type="entry name" value="SERYL-TRNA SYNTHETASE"/>
    <property type="match status" value="1"/>
</dbReference>
<dbReference type="Pfam" id="PF02403">
    <property type="entry name" value="Seryl_tRNA_N"/>
    <property type="match status" value="1"/>
</dbReference>
<dbReference type="Pfam" id="PF00587">
    <property type="entry name" value="tRNA-synt_2b"/>
    <property type="match status" value="1"/>
</dbReference>
<dbReference type="PIRSF" id="PIRSF001529">
    <property type="entry name" value="Ser-tRNA-synth_IIa"/>
    <property type="match status" value="1"/>
</dbReference>
<dbReference type="PRINTS" id="PR00981">
    <property type="entry name" value="TRNASYNTHSER"/>
</dbReference>
<dbReference type="SUPFAM" id="SSF55681">
    <property type="entry name" value="Class II aaRS and biotin synthetases"/>
    <property type="match status" value="1"/>
</dbReference>
<dbReference type="SUPFAM" id="SSF46589">
    <property type="entry name" value="tRNA-binding arm"/>
    <property type="match status" value="1"/>
</dbReference>
<dbReference type="PROSITE" id="PS50862">
    <property type="entry name" value="AA_TRNA_LIGASE_II"/>
    <property type="match status" value="1"/>
</dbReference>
<reference key="1">
    <citation type="submission" date="2007-10" db="EMBL/GenBank/DDBJ databases">
        <title>Genome sequence of Campylobacter concisus 13826 isolated from human feces.</title>
        <authorList>
            <person name="Fouts D.E."/>
            <person name="Mongodin E.F."/>
            <person name="Puiu D."/>
            <person name="Sebastian Y."/>
            <person name="Miller W.G."/>
            <person name="Mandrell R.E."/>
            <person name="On S."/>
            <person name="Nelson K.E."/>
        </authorList>
    </citation>
    <scope>NUCLEOTIDE SEQUENCE [LARGE SCALE GENOMIC DNA]</scope>
    <source>
        <strain>13826</strain>
    </source>
</reference>
<evidence type="ECO:0000255" key="1">
    <source>
        <dbReference type="HAMAP-Rule" id="MF_00176"/>
    </source>
</evidence>
<protein>
    <recommendedName>
        <fullName evidence="1">Serine--tRNA ligase</fullName>
        <ecNumber evidence="1">6.1.1.11</ecNumber>
    </recommendedName>
    <alternativeName>
        <fullName evidence="1">Seryl-tRNA synthetase</fullName>
        <shortName evidence="1">SerRS</shortName>
    </alternativeName>
    <alternativeName>
        <fullName evidence="1">Seryl-tRNA(Ser/Sec) synthetase</fullName>
    </alternativeName>
</protein>
<comment type="function">
    <text evidence="1">Catalyzes the attachment of serine to tRNA(Ser). Is also able to aminoacylate tRNA(Sec) with serine, to form the misacylated tRNA L-seryl-tRNA(Sec), which will be further converted into selenocysteinyl-tRNA(Sec).</text>
</comment>
<comment type="catalytic activity">
    <reaction evidence="1">
        <text>tRNA(Ser) + L-serine + ATP = L-seryl-tRNA(Ser) + AMP + diphosphate + H(+)</text>
        <dbReference type="Rhea" id="RHEA:12292"/>
        <dbReference type="Rhea" id="RHEA-COMP:9669"/>
        <dbReference type="Rhea" id="RHEA-COMP:9703"/>
        <dbReference type="ChEBI" id="CHEBI:15378"/>
        <dbReference type="ChEBI" id="CHEBI:30616"/>
        <dbReference type="ChEBI" id="CHEBI:33019"/>
        <dbReference type="ChEBI" id="CHEBI:33384"/>
        <dbReference type="ChEBI" id="CHEBI:78442"/>
        <dbReference type="ChEBI" id="CHEBI:78533"/>
        <dbReference type="ChEBI" id="CHEBI:456215"/>
        <dbReference type="EC" id="6.1.1.11"/>
    </reaction>
</comment>
<comment type="catalytic activity">
    <reaction evidence="1">
        <text>tRNA(Sec) + L-serine + ATP = L-seryl-tRNA(Sec) + AMP + diphosphate + H(+)</text>
        <dbReference type="Rhea" id="RHEA:42580"/>
        <dbReference type="Rhea" id="RHEA-COMP:9742"/>
        <dbReference type="Rhea" id="RHEA-COMP:10128"/>
        <dbReference type="ChEBI" id="CHEBI:15378"/>
        <dbReference type="ChEBI" id="CHEBI:30616"/>
        <dbReference type="ChEBI" id="CHEBI:33019"/>
        <dbReference type="ChEBI" id="CHEBI:33384"/>
        <dbReference type="ChEBI" id="CHEBI:78442"/>
        <dbReference type="ChEBI" id="CHEBI:78533"/>
        <dbReference type="ChEBI" id="CHEBI:456215"/>
        <dbReference type="EC" id="6.1.1.11"/>
    </reaction>
</comment>
<comment type="pathway">
    <text evidence="1">Aminoacyl-tRNA biosynthesis; selenocysteinyl-tRNA(Sec) biosynthesis; L-seryl-tRNA(Sec) from L-serine and tRNA(Sec): step 1/1.</text>
</comment>
<comment type="subunit">
    <text evidence="1">Homodimer. The tRNA molecule binds across the dimer.</text>
</comment>
<comment type="subcellular location">
    <subcellularLocation>
        <location evidence="1">Cytoplasm</location>
    </subcellularLocation>
</comment>
<comment type="domain">
    <text evidence="1">Consists of two distinct domains, a catalytic core and a N-terminal extension that is involved in tRNA binding.</text>
</comment>
<comment type="similarity">
    <text evidence="1">Belongs to the class-II aminoacyl-tRNA synthetase family. Type-1 seryl-tRNA synthetase subfamily.</text>
</comment>
<sequence length="414" mass="46639">MINLKLLETNYDEFVKKLEGKNVKASLLDELLHTFNELKQKRKALENFQAIQNAKSKELGVKARAGEDVSELKSELNLNKAALADADEIVKQYEEKLEQISFSVPNITDDDVPFGKDENDNVCIKTVLEPTKFDFKPKEHWELGESLGWLDFERGAKLSGSRFTVLRGMGARLGRALVNYMIDFNSARGFELVNVPYLVSSNTLFGTGQLPKFEEDLYKVRDEDLYLIPTSEVPVTNLYNDTIIEAEQLPIKMTCYSACFRQEAGSAGRDTRGMIRQHQFEKVELVSITKPDQSEGVLAEMISCASDLLTSLGLPHRHMLLCSGDLGFSAAKTIDLEVWLPGQGKYREISSISNTRDFQARRAKIRFKDGKKNMLVNTLNGSSLAVGRTLIAIMENYQKADGTIEIPEVLKRYM</sequence>
<gene>
    <name evidence="1" type="primary">serS</name>
    <name type="ordered locus">Ccon26_03140</name>
    <name type="ORF">CCC13826_0773</name>
</gene>
<proteinExistence type="inferred from homology"/>
<feature type="chain" id="PRO_1000019640" description="Serine--tRNA ligase">
    <location>
        <begin position="1"/>
        <end position="414"/>
    </location>
</feature>
<feature type="binding site" evidence="1">
    <location>
        <begin position="230"/>
        <end position="232"/>
    </location>
    <ligand>
        <name>L-serine</name>
        <dbReference type="ChEBI" id="CHEBI:33384"/>
    </ligand>
</feature>
<feature type="binding site" evidence="1">
    <location>
        <begin position="261"/>
        <end position="263"/>
    </location>
    <ligand>
        <name>ATP</name>
        <dbReference type="ChEBI" id="CHEBI:30616"/>
    </ligand>
</feature>
<feature type="binding site" evidence="1">
    <location>
        <position position="284"/>
    </location>
    <ligand>
        <name>L-serine</name>
        <dbReference type="ChEBI" id="CHEBI:33384"/>
    </ligand>
</feature>
<feature type="binding site" evidence="1">
    <location>
        <begin position="348"/>
        <end position="351"/>
    </location>
    <ligand>
        <name>ATP</name>
        <dbReference type="ChEBI" id="CHEBI:30616"/>
    </ligand>
</feature>
<feature type="binding site" evidence="1">
    <location>
        <position position="382"/>
    </location>
    <ligand>
        <name>L-serine</name>
        <dbReference type="ChEBI" id="CHEBI:33384"/>
    </ligand>
</feature>
<keyword id="KW-0030">Aminoacyl-tRNA synthetase</keyword>
<keyword id="KW-0067">ATP-binding</keyword>
<keyword id="KW-0963">Cytoplasm</keyword>
<keyword id="KW-0436">Ligase</keyword>
<keyword id="KW-0547">Nucleotide-binding</keyword>
<keyword id="KW-0648">Protein biosynthesis</keyword>